<evidence type="ECO:0000269" key="1">
    <source>
    </source>
</evidence>
<evidence type="ECO:0000269" key="2">
    <source>
    </source>
</evidence>
<evidence type="ECO:0000269" key="3">
    <source>
    </source>
</evidence>
<evidence type="ECO:0000303" key="4">
    <source>
    </source>
</evidence>
<evidence type="ECO:0000305" key="5"/>
<evidence type="ECO:0000305" key="6">
    <source>
    </source>
</evidence>
<feature type="chain" id="PRO_0000200008" description="Gas vesicle protein S">
    <location>
        <begin position="1"/>
        <end position="95"/>
    </location>
</feature>
<reference key="1">
    <citation type="journal article" date="1998" name="J. Bacteriol.">
        <title>Gas vesicle genes identified in Bacillus megaterium and functional expression in Escherichia coli.</title>
        <authorList>
            <person name="Li N."/>
            <person name="Cannon M.C."/>
        </authorList>
    </citation>
    <scope>NUCLEOTIDE SEQUENCE [GENOMIC DNA]</scope>
    <scope>FUNCTION</scope>
    <scope>EXPRESSION IN E.COLI</scope>
    <scope>PROBABLE SUBCELLULAR LOCATION</scope>
    <source>
        <strain>ATCC 35985 / VT1660</strain>
    </source>
</reference>
<reference key="2">
    <citation type="journal article" date="2018" name="AIChE J.">
        <title>Recombinantly Expressed Gas Vesicles as Nanoscale Contrast Agents for Ultrasound and Hyperpolarized MRI.</title>
        <authorList>
            <person name="Farhadi A."/>
            <person name="Ho G."/>
            <person name="Kunth M."/>
            <person name="Ling B."/>
            <person name="Lakshmanan A."/>
            <person name="Lu G."/>
            <person name="Bourdeau R.W."/>
            <person name="Schroeder L."/>
            <person name="Shapiro M.G."/>
        </authorList>
    </citation>
    <scope>BIOTECHNOLOGY</scope>
    <source>
        <strain>ATCC 35985 / VT1660</strain>
    </source>
</reference>
<reference key="3">
    <citation type="journal article" date="2018" name="Nature">
        <title>Acoustic reporter genes for noninvasive imaging of microorganisms in mammalian hosts.</title>
        <authorList>
            <person name="Bourdeau R.W."/>
            <person name="Lee-Gosselin A."/>
            <person name="Lakshmanan A."/>
            <person name="Farhadi A."/>
            <person name="Kumar S.R."/>
            <person name="Nety S.P."/>
            <person name="Shapiro M.G."/>
        </authorList>
    </citation>
    <scope>BIOTECHNOLOGY</scope>
</reference>
<proteinExistence type="evidence at protein level"/>
<comment type="function">
    <text evidence="5 6">Probably a minor component of the gas vesicle (Probable). It is not clear what function gas vesicles perform in soil bacteria (Probable).</text>
</comment>
<comment type="function">
    <text evidence="3">When a minimal gvp locus (gvpA2-gvpR-gvpN-gvpF-gvpG-gvpL-gvpS-gvpK-gvpJ-gvpT-gvpU, called pNL29) is expressed in E.coli gas vesicles are made.</text>
</comment>
<comment type="subcellular location">
    <subcellularLocation>
        <location evidence="6">Gas vesicle</location>
    </subcellularLocation>
</comment>
<comment type="biotechnology">
    <text evidence="1 2">The minimal pNL29 gvp locus overexpressed in E.coli can be filled with Xe and used as a contrast agent for ultrasound and magnetic resonance imaging (PubMed:30555168). Engineered gas vesicles (GV) can be used for noninvasive imaging in E.coli and mice. Heterologous GVs with 2 copies of gvpA plus gvpC from D.flosaquae and the gvpR-gvpU operon from this bacterium make GVs suitable for imaging of bacteria deep in mouse tissues (e.g. the gastrointestinal tract), or when expressed in tumor-homing bacteria, can be detected in tumors (PubMed:29300010).</text>
</comment>
<comment type="similarity">
    <text evidence="5">Belongs to the gas vesicle GvpA family.</text>
</comment>
<sequence length="95" mass="10422">MSLKQSMENKDIALIDILDVILDKGVAIKGDLIISIAGVDLVYLDLRVLISSVETLVQAKEGNHKPITSEQFDKQKEELMDATGQPSKWTNPLGS</sequence>
<dbReference type="EMBL" id="AF053765">
    <property type="protein sequence ID" value="AAC38410.1"/>
    <property type="molecule type" value="Genomic_DNA"/>
</dbReference>
<dbReference type="RefSeq" id="WP_097812235.1">
    <property type="nucleotide sequence ID" value="NZ_CP047699.1"/>
</dbReference>
<dbReference type="GO" id="GO:0031411">
    <property type="term" value="C:gas vesicle"/>
    <property type="evidence" value="ECO:0007669"/>
    <property type="project" value="UniProtKB-SubCell"/>
</dbReference>
<dbReference type="GO" id="GO:0012506">
    <property type="term" value="C:vesicle membrane"/>
    <property type="evidence" value="ECO:0007669"/>
    <property type="project" value="InterPro"/>
</dbReference>
<dbReference type="GO" id="GO:0005198">
    <property type="term" value="F:structural molecule activity"/>
    <property type="evidence" value="ECO:0007669"/>
    <property type="project" value="InterPro"/>
</dbReference>
<dbReference type="InterPro" id="IPR000638">
    <property type="entry name" value="Gas-vesicle_GvpA-like"/>
</dbReference>
<dbReference type="InterPro" id="IPR050530">
    <property type="entry name" value="GvpA"/>
</dbReference>
<dbReference type="InterPro" id="IPR018493">
    <property type="entry name" value="GvpA-like_CS"/>
</dbReference>
<dbReference type="PANTHER" id="PTHR35344:SF4">
    <property type="entry name" value="GAS VESICLE PROTEIN A1"/>
    <property type="match status" value="1"/>
</dbReference>
<dbReference type="PANTHER" id="PTHR35344">
    <property type="entry name" value="GAS VESICLE STRUCTURAL PROTEIN 2-RELATED"/>
    <property type="match status" value="1"/>
</dbReference>
<dbReference type="Pfam" id="PF00741">
    <property type="entry name" value="Gas_vesicle"/>
    <property type="match status" value="1"/>
</dbReference>
<dbReference type="PROSITE" id="PS00234">
    <property type="entry name" value="GAS_VESICLE_A_1"/>
    <property type="match status" value="1"/>
</dbReference>
<accession>O68671</accession>
<name>GVPS_PRIMG</name>
<organism>
    <name type="scientific">Priestia megaterium</name>
    <name type="common">Bacillus megaterium</name>
    <dbReference type="NCBI Taxonomy" id="1404"/>
    <lineage>
        <taxon>Bacteria</taxon>
        <taxon>Bacillati</taxon>
        <taxon>Bacillota</taxon>
        <taxon>Bacilli</taxon>
        <taxon>Bacillales</taxon>
        <taxon>Bacillaceae</taxon>
        <taxon>Priestia</taxon>
    </lineage>
</organism>
<keyword id="KW-0304">Gas vesicle</keyword>
<protein>
    <recommendedName>
        <fullName evidence="4">Gas vesicle protein S</fullName>
        <shortName>GvpS</shortName>
    </recommendedName>
</protein>
<gene>
    <name evidence="4" type="primary">gvpS</name>
</gene>